<accession>Q39FG2</accession>
<feature type="chain" id="PRO_1000145361" description="Peptide methionine sulfoxide reductase MsrB">
    <location>
        <begin position="1"/>
        <end position="143"/>
    </location>
</feature>
<feature type="domain" description="MsrB" evidence="2">
    <location>
        <begin position="16"/>
        <end position="139"/>
    </location>
</feature>
<feature type="active site" description="Nucleophile" evidence="2">
    <location>
        <position position="128"/>
    </location>
</feature>
<feature type="binding site" evidence="2">
    <location>
        <position position="55"/>
    </location>
    <ligand>
        <name>Zn(2+)</name>
        <dbReference type="ChEBI" id="CHEBI:29105"/>
    </ligand>
</feature>
<feature type="binding site" evidence="2">
    <location>
        <position position="58"/>
    </location>
    <ligand>
        <name>Zn(2+)</name>
        <dbReference type="ChEBI" id="CHEBI:29105"/>
    </ligand>
</feature>
<feature type="binding site" evidence="2">
    <location>
        <position position="104"/>
    </location>
    <ligand>
        <name>Zn(2+)</name>
        <dbReference type="ChEBI" id="CHEBI:29105"/>
    </ligand>
</feature>
<feature type="binding site" evidence="2">
    <location>
        <position position="107"/>
    </location>
    <ligand>
        <name>Zn(2+)</name>
        <dbReference type="ChEBI" id="CHEBI:29105"/>
    </ligand>
</feature>
<gene>
    <name evidence="1" type="primary">msrB</name>
    <name type="ordered locus">Bcep18194_A5210</name>
</gene>
<protein>
    <recommendedName>
        <fullName evidence="1">Peptide methionine sulfoxide reductase MsrB</fullName>
        <ecNumber evidence="1">1.8.4.12</ecNumber>
    </recommendedName>
    <alternativeName>
        <fullName evidence="1">Peptide-methionine (R)-S-oxide reductase</fullName>
    </alternativeName>
</protein>
<name>MSRB_BURL3</name>
<evidence type="ECO:0000255" key="1">
    <source>
        <dbReference type="HAMAP-Rule" id="MF_01400"/>
    </source>
</evidence>
<evidence type="ECO:0000255" key="2">
    <source>
        <dbReference type="PROSITE-ProRule" id="PRU01126"/>
    </source>
</evidence>
<keyword id="KW-0479">Metal-binding</keyword>
<keyword id="KW-0560">Oxidoreductase</keyword>
<keyword id="KW-0862">Zinc</keyword>
<comment type="catalytic activity">
    <reaction evidence="1">
        <text>L-methionyl-[protein] + [thioredoxin]-disulfide + H2O = L-methionyl-(R)-S-oxide-[protein] + [thioredoxin]-dithiol</text>
        <dbReference type="Rhea" id="RHEA:24164"/>
        <dbReference type="Rhea" id="RHEA-COMP:10698"/>
        <dbReference type="Rhea" id="RHEA-COMP:10700"/>
        <dbReference type="Rhea" id="RHEA-COMP:12313"/>
        <dbReference type="Rhea" id="RHEA-COMP:12314"/>
        <dbReference type="ChEBI" id="CHEBI:15377"/>
        <dbReference type="ChEBI" id="CHEBI:16044"/>
        <dbReference type="ChEBI" id="CHEBI:29950"/>
        <dbReference type="ChEBI" id="CHEBI:45764"/>
        <dbReference type="ChEBI" id="CHEBI:50058"/>
        <dbReference type="EC" id="1.8.4.12"/>
    </reaction>
</comment>
<comment type="cofactor">
    <cofactor evidence="1">
        <name>Zn(2+)</name>
        <dbReference type="ChEBI" id="CHEBI:29105"/>
    </cofactor>
    <text evidence="1">Binds 1 zinc ion per subunit. The zinc ion is important for the structural integrity of the protein.</text>
</comment>
<comment type="similarity">
    <text evidence="1">Belongs to the MsrB Met sulfoxide reductase family.</text>
</comment>
<reference key="1">
    <citation type="submission" date="2005-10" db="EMBL/GenBank/DDBJ databases">
        <title>Complete sequence of chromosome 1 of Burkholderia sp. 383.</title>
        <authorList>
            <consortium name="US DOE Joint Genome Institute"/>
            <person name="Copeland A."/>
            <person name="Lucas S."/>
            <person name="Lapidus A."/>
            <person name="Barry K."/>
            <person name="Detter J.C."/>
            <person name="Glavina T."/>
            <person name="Hammon N."/>
            <person name="Israni S."/>
            <person name="Pitluck S."/>
            <person name="Chain P."/>
            <person name="Malfatti S."/>
            <person name="Shin M."/>
            <person name="Vergez L."/>
            <person name="Schmutz J."/>
            <person name="Larimer F."/>
            <person name="Land M."/>
            <person name="Kyrpides N."/>
            <person name="Lykidis A."/>
            <person name="Richardson P."/>
        </authorList>
    </citation>
    <scope>NUCLEOTIDE SEQUENCE [LARGE SCALE GENOMIC DNA]</scope>
    <source>
        <strain>ATCC 17760 / DSM 23089 / LMG 22485 / NCIMB 9086 / R18194 / 383</strain>
    </source>
</reference>
<organism>
    <name type="scientific">Burkholderia lata (strain ATCC 17760 / DSM 23089 / LMG 22485 / NCIMB 9086 / R18194 / 383)</name>
    <dbReference type="NCBI Taxonomy" id="482957"/>
    <lineage>
        <taxon>Bacteria</taxon>
        <taxon>Pseudomonadati</taxon>
        <taxon>Pseudomonadota</taxon>
        <taxon>Betaproteobacteria</taxon>
        <taxon>Burkholderiales</taxon>
        <taxon>Burkholderiaceae</taxon>
        <taxon>Burkholderia</taxon>
        <taxon>Burkholderia cepacia complex</taxon>
    </lineage>
</organism>
<sequence>MSHDSDDKTFPYEKDDAELRRRLTPMQYEVTQHAATERAFTGEYTDTEDDGIYKCVVCSTPLFESGSKFHSGCGWPSYFKPLNGEVIDEKVDYSHGMVRVEVRCNHCGAHLGHVFEDGPRDQTGLRYCINSAALNFESRPENE</sequence>
<proteinExistence type="inferred from homology"/>
<dbReference type="EC" id="1.8.4.12" evidence="1"/>
<dbReference type="EMBL" id="CP000151">
    <property type="protein sequence ID" value="ABB08804.1"/>
    <property type="molecule type" value="Genomic_DNA"/>
</dbReference>
<dbReference type="RefSeq" id="WP_011352349.1">
    <property type="nucleotide sequence ID" value="NZ_WNDV01000021.1"/>
</dbReference>
<dbReference type="SMR" id="Q39FG2"/>
<dbReference type="GeneID" id="45095086"/>
<dbReference type="KEGG" id="bur:Bcep18194_A5210"/>
<dbReference type="PATRIC" id="fig|482957.22.peg.2149"/>
<dbReference type="HOGENOM" id="CLU_031040_8_5_4"/>
<dbReference type="Proteomes" id="UP000002705">
    <property type="component" value="Chromosome 1"/>
</dbReference>
<dbReference type="GO" id="GO:0005737">
    <property type="term" value="C:cytoplasm"/>
    <property type="evidence" value="ECO:0007669"/>
    <property type="project" value="TreeGrafter"/>
</dbReference>
<dbReference type="GO" id="GO:0033743">
    <property type="term" value="F:peptide-methionine (R)-S-oxide reductase activity"/>
    <property type="evidence" value="ECO:0007669"/>
    <property type="project" value="UniProtKB-UniRule"/>
</dbReference>
<dbReference type="GO" id="GO:0008270">
    <property type="term" value="F:zinc ion binding"/>
    <property type="evidence" value="ECO:0007669"/>
    <property type="project" value="UniProtKB-UniRule"/>
</dbReference>
<dbReference type="GO" id="GO:0030091">
    <property type="term" value="P:protein repair"/>
    <property type="evidence" value="ECO:0007669"/>
    <property type="project" value="InterPro"/>
</dbReference>
<dbReference type="GO" id="GO:0006979">
    <property type="term" value="P:response to oxidative stress"/>
    <property type="evidence" value="ECO:0007669"/>
    <property type="project" value="InterPro"/>
</dbReference>
<dbReference type="FunFam" id="2.170.150.20:FF:000003">
    <property type="entry name" value="Peptide methionine sulfoxide reductase MsrB"/>
    <property type="match status" value="1"/>
</dbReference>
<dbReference type="Gene3D" id="2.170.150.20">
    <property type="entry name" value="Peptide methionine sulfoxide reductase"/>
    <property type="match status" value="1"/>
</dbReference>
<dbReference type="HAMAP" id="MF_01400">
    <property type="entry name" value="MsrB"/>
    <property type="match status" value="1"/>
</dbReference>
<dbReference type="InterPro" id="IPR028427">
    <property type="entry name" value="Met_Sox_Rdtase_MsrB"/>
</dbReference>
<dbReference type="InterPro" id="IPR002579">
    <property type="entry name" value="Met_Sox_Rdtase_MsrB_dom"/>
</dbReference>
<dbReference type="InterPro" id="IPR011057">
    <property type="entry name" value="Mss4-like_sf"/>
</dbReference>
<dbReference type="NCBIfam" id="TIGR00357">
    <property type="entry name" value="peptide-methionine (R)-S-oxide reductase MsrB"/>
    <property type="match status" value="1"/>
</dbReference>
<dbReference type="PANTHER" id="PTHR10173">
    <property type="entry name" value="METHIONINE SULFOXIDE REDUCTASE"/>
    <property type="match status" value="1"/>
</dbReference>
<dbReference type="PANTHER" id="PTHR10173:SF52">
    <property type="entry name" value="METHIONINE-R-SULFOXIDE REDUCTASE B1"/>
    <property type="match status" value="1"/>
</dbReference>
<dbReference type="Pfam" id="PF01641">
    <property type="entry name" value="SelR"/>
    <property type="match status" value="1"/>
</dbReference>
<dbReference type="SUPFAM" id="SSF51316">
    <property type="entry name" value="Mss4-like"/>
    <property type="match status" value="1"/>
</dbReference>
<dbReference type="PROSITE" id="PS51790">
    <property type="entry name" value="MSRB"/>
    <property type="match status" value="1"/>
</dbReference>